<sequence length="476" mass="52833">MVKLIHTLADHGDDVNCCAFSFSLLATCSLDKTIRLYSLRDFTELPHSPLKFHTYAVHCCCFSPSGHILASCSTDGTTVLWNTENGQMLAVMEQPSGSPVRVCQFSPDSTCLASGAADGTVVLWNAQSYKLYRCGSVKDGSLAACAFSPNGSFFVTGSSCGDLTVWDDKMRCLHSEKAHDLGITCCDFSSQPVSDGEQGLQFFRLASCGQDCQVKIWIVSFTHILGFELKYKSTLSGHCAPVLACAFSHDGQMLVSGSVDKSVIVYDTNTENILHTLTQHTRYVTTCAFAPNTLLLATGSMDKTVNIWQFDLETLCQARRTEHQLKQFTEDWSEEDVSTWLCAQDLKDLVGIFKMNNIDGKELLNLTKESLADDLKIESLGLRSKVLRKIEELRTKVKSLSSGIPDEFICPITRELMKDPVIASDGYSYEKEAMENWISKKKRTSPMTNLVLPSAVLTPNRTLKMAINRWLETHQK</sequence>
<accession>Q8N9V3</accession>
<accession>Q53TI9</accession>
<accession>Q8N6N8</accession>
<proteinExistence type="evidence at protein level"/>
<comment type="alternative products">
    <event type="alternative splicing"/>
    <isoform>
        <id>Q8N9V3-1</id>
        <name>1</name>
        <sequence type="displayed"/>
    </isoform>
    <isoform>
        <id>Q8N9V3-2</id>
        <name>2</name>
        <sequence type="described" ref="VSP_023337"/>
    </isoform>
</comment>
<keyword id="KW-0025">Alternative splicing</keyword>
<keyword id="KW-0597">Phosphoprotein</keyword>
<keyword id="KW-1267">Proteomics identification</keyword>
<keyword id="KW-1185">Reference proteome</keyword>
<keyword id="KW-0677">Repeat</keyword>
<keyword id="KW-0853">WD repeat</keyword>
<gene>
    <name type="primary">WDSUB1</name>
    <name type="synonym">WDSAM1</name>
</gene>
<protein>
    <recommendedName>
        <fullName>WD repeat, SAM and U-box domain-containing protein 1</fullName>
    </recommendedName>
</protein>
<organism>
    <name type="scientific">Homo sapiens</name>
    <name type="common">Human</name>
    <dbReference type="NCBI Taxonomy" id="9606"/>
    <lineage>
        <taxon>Eukaryota</taxon>
        <taxon>Metazoa</taxon>
        <taxon>Chordata</taxon>
        <taxon>Craniata</taxon>
        <taxon>Vertebrata</taxon>
        <taxon>Euteleostomi</taxon>
        <taxon>Mammalia</taxon>
        <taxon>Eutheria</taxon>
        <taxon>Euarchontoglires</taxon>
        <taxon>Primates</taxon>
        <taxon>Haplorrhini</taxon>
        <taxon>Catarrhini</taxon>
        <taxon>Hominidae</taxon>
        <taxon>Homo</taxon>
    </lineage>
</organism>
<evidence type="ECO:0000255" key="1">
    <source>
        <dbReference type="PROSITE-ProRule" id="PRU00184"/>
    </source>
</evidence>
<evidence type="ECO:0000269" key="2">
    <source>
    </source>
</evidence>
<evidence type="ECO:0000269" key="3">
    <source>
    </source>
</evidence>
<evidence type="ECO:0000303" key="4">
    <source>
    </source>
</evidence>
<evidence type="ECO:0007744" key="5">
    <source>
    </source>
</evidence>
<feature type="chain" id="PRO_0000278608" description="WD repeat, SAM and U-box domain-containing protein 1">
    <location>
        <begin position="1"/>
        <end position="476"/>
    </location>
</feature>
<feature type="repeat" description="WD 1">
    <location>
        <begin position="10"/>
        <end position="47"/>
    </location>
</feature>
<feature type="repeat" description="WD 2">
    <location>
        <begin position="52"/>
        <end position="91"/>
    </location>
</feature>
<feature type="repeat" description="WD 3">
    <location>
        <begin position="95"/>
        <end position="134"/>
    </location>
</feature>
<feature type="repeat" description="WD 4">
    <location>
        <begin position="137"/>
        <end position="176"/>
    </location>
</feature>
<feature type="repeat" description="WD 5">
    <location>
        <begin position="178"/>
        <end position="228"/>
    </location>
</feature>
<feature type="repeat" description="WD 6">
    <location>
        <begin position="237"/>
        <end position="276"/>
    </location>
</feature>
<feature type="repeat" description="WD 7">
    <location>
        <begin position="279"/>
        <end position="318"/>
    </location>
</feature>
<feature type="domain" description="SAM" evidence="1">
    <location>
        <begin position="332"/>
        <end position="396"/>
    </location>
</feature>
<feature type="domain" description="U-box">
    <location>
        <begin position="403"/>
        <end position="476"/>
    </location>
</feature>
<feature type="modified residue" description="Phosphothreonine" evidence="5">
    <location>
        <position position="458"/>
    </location>
</feature>
<feature type="splice variant" id="VSP_023337" description="In isoform 2." evidence="4">
    <location>
        <begin position="226"/>
        <end position="317"/>
    </location>
</feature>
<feature type="sequence variant" id="VAR_030791" description="In dbSNP:rs16843852.">
    <original>K</original>
    <variation>T</variation>
    <location>
        <position position="215"/>
    </location>
</feature>
<feature type="sequence variant" id="VAR_030792" description="In dbSNP:rs17852677." evidence="3">
    <original>H</original>
    <variation>D</variation>
    <location>
        <position position="223"/>
    </location>
</feature>
<feature type="sequence variant" id="VAR_030793" description="In dbSNP:rs7591849." evidence="2">
    <original>R</original>
    <variation>S</variation>
    <location>
        <position position="320"/>
    </location>
</feature>
<name>WSDU1_HUMAN</name>
<reference key="1">
    <citation type="journal article" date="2004" name="Nat. Genet.">
        <title>Complete sequencing and characterization of 21,243 full-length human cDNAs.</title>
        <authorList>
            <person name="Ota T."/>
            <person name="Suzuki Y."/>
            <person name="Nishikawa T."/>
            <person name="Otsuki T."/>
            <person name="Sugiyama T."/>
            <person name="Irie R."/>
            <person name="Wakamatsu A."/>
            <person name="Hayashi K."/>
            <person name="Sato H."/>
            <person name="Nagai K."/>
            <person name="Kimura K."/>
            <person name="Makita H."/>
            <person name="Sekine M."/>
            <person name="Obayashi M."/>
            <person name="Nishi T."/>
            <person name="Shibahara T."/>
            <person name="Tanaka T."/>
            <person name="Ishii S."/>
            <person name="Yamamoto J."/>
            <person name="Saito K."/>
            <person name="Kawai Y."/>
            <person name="Isono Y."/>
            <person name="Nakamura Y."/>
            <person name="Nagahari K."/>
            <person name="Murakami K."/>
            <person name="Yasuda T."/>
            <person name="Iwayanagi T."/>
            <person name="Wagatsuma M."/>
            <person name="Shiratori A."/>
            <person name="Sudo H."/>
            <person name="Hosoiri T."/>
            <person name="Kaku Y."/>
            <person name="Kodaira H."/>
            <person name="Kondo H."/>
            <person name="Sugawara M."/>
            <person name="Takahashi M."/>
            <person name="Kanda K."/>
            <person name="Yokoi T."/>
            <person name="Furuya T."/>
            <person name="Kikkawa E."/>
            <person name="Omura Y."/>
            <person name="Abe K."/>
            <person name="Kamihara K."/>
            <person name="Katsuta N."/>
            <person name="Sato K."/>
            <person name="Tanikawa M."/>
            <person name="Yamazaki M."/>
            <person name="Ninomiya K."/>
            <person name="Ishibashi T."/>
            <person name="Yamashita H."/>
            <person name="Murakawa K."/>
            <person name="Fujimori K."/>
            <person name="Tanai H."/>
            <person name="Kimata M."/>
            <person name="Watanabe M."/>
            <person name="Hiraoka S."/>
            <person name="Chiba Y."/>
            <person name="Ishida S."/>
            <person name="Ono Y."/>
            <person name="Takiguchi S."/>
            <person name="Watanabe S."/>
            <person name="Yosida M."/>
            <person name="Hotuta T."/>
            <person name="Kusano J."/>
            <person name="Kanehori K."/>
            <person name="Takahashi-Fujii A."/>
            <person name="Hara H."/>
            <person name="Tanase T.-O."/>
            <person name="Nomura Y."/>
            <person name="Togiya S."/>
            <person name="Komai F."/>
            <person name="Hara R."/>
            <person name="Takeuchi K."/>
            <person name="Arita M."/>
            <person name="Imose N."/>
            <person name="Musashino K."/>
            <person name="Yuuki H."/>
            <person name="Oshima A."/>
            <person name="Sasaki N."/>
            <person name="Aotsuka S."/>
            <person name="Yoshikawa Y."/>
            <person name="Matsunawa H."/>
            <person name="Ichihara T."/>
            <person name="Shiohata N."/>
            <person name="Sano S."/>
            <person name="Moriya S."/>
            <person name="Momiyama H."/>
            <person name="Satoh N."/>
            <person name="Takami S."/>
            <person name="Terashima Y."/>
            <person name="Suzuki O."/>
            <person name="Nakagawa S."/>
            <person name="Senoh A."/>
            <person name="Mizoguchi H."/>
            <person name="Goto Y."/>
            <person name="Shimizu F."/>
            <person name="Wakebe H."/>
            <person name="Hishigaki H."/>
            <person name="Watanabe T."/>
            <person name="Sugiyama A."/>
            <person name="Takemoto M."/>
            <person name="Kawakami B."/>
            <person name="Yamazaki M."/>
            <person name="Watanabe K."/>
            <person name="Kumagai A."/>
            <person name="Itakura S."/>
            <person name="Fukuzumi Y."/>
            <person name="Fujimori Y."/>
            <person name="Komiyama M."/>
            <person name="Tashiro H."/>
            <person name="Tanigami A."/>
            <person name="Fujiwara T."/>
            <person name="Ono T."/>
            <person name="Yamada K."/>
            <person name="Fujii Y."/>
            <person name="Ozaki K."/>
            <person name="Hirao M."/>
            <person name="Ohmori Y."/>
            <person name="Kawabata A."/>
            <person name="Hikiji T."/>
            <person name="Kobatake N."/>
            <person name="Inagaki H."/>
            <person name="Ikema Y."/>
            <person name="Okamoto S."/>
            <person name="Okitani R."/>
            <person name="Kawakami T."/>
            <person name="Noguchi S."/>
            <person name="Itoh T."/>
            <person name="Shigeta K."/>
            <person name="Senba T."/>
            <person name="Matsumura K."/>
            <person name="Nakajima Y."/>
            <person name="Mizuno T."/>
            <person name="Morinaga M."/>
            <person name="Sasaki M."/>
            <person name="Togashi T."/>
            <person name="Oyama M."/>
            <person name="Hata H."/>
            <person name="Watanabe M."/>
            <person name="Komatsu T."/>
            <person name="Mizushima-Sugano J."/>
            <person name="Satoh T."/>
            <person name="Shirai Y."/>
            <person name="Takahashi Y."/>
            <person name="Nakagawa K."/>
            <person name="Okumura K."/>
            <person name="Nagase T."/>
            <person name="Nomura N."/>
            <person name="Kikuchi H."/>
            <person name="Masuho Y."/>
            <person name="Yamashita R."/>
            <person name="Nakai K."/>
            <person name="Yada T."/>
            <person name="Nakamura Y."/>
            <person name="Ohara O."/>
            <person name="Isogai T."/>
            <person name="Sugano S."/>
        </authorList>
    </citation>
    <scope>NUCLEOTIDE SEQUENCE [LARGE SCALE MRNA] (ISOFORM 1)</scope>
    <scope>VARIANT SER-320</scope>
    <source>
        <tissue>Testis</tissue>
    </source>
</reference>
<reference key="2">
    <citation type="journal article" date="2005" name="Nature">
        <title>Generation and annotation of the DNA sequences of human chromosomes 2 and 4.</title>
        <authorList>
            <person name="Hillier L.W."/>
            <person name="Graves T.A."/>
            <person name="Fulton R.S."/>
            <person name="Fulton L.A."/>
            <person name="Pepin K.H."/>
            <person name="Minx P."/>
            <person name="Wagner-McPherson C."/>
            <person name="Layman D."/>
            <person name="Wylie K."/>
            <person name="Sekhon M."/>
            <person name="Becker M.C."/>
            <person name="Fewell G.A."/>
            <person name="Delehaunty K.D."/>
            <person name="Miner T.L."/>
            <person name="Nash W.E."/>
            <person name="Kremitzki C."/>
            <person name="Oddy L."/>
            <person name="Du H."/>
            <person name="Sun H."/>
            <person name="Bradshaw-Cordum H."/>
            <person name="Ali J."/>
            <person name="Carter J."/>
            <person name="Cordes M."/>
            <person name="Harris A."/>
            <person name="Isak A."/>
            <person name="van Brunt A."/>
            <person name="Nguyen C."/>
            <person name="Du F."/>
            <person name="Courtney L."/>
            <person name="Kalicki J."/>
            <person name="Ozersky P."/>
            <person name="Abbott S."/>
            <person name="Armstrong J."/>
            <person name="Belter E.A."/>
            <person name="Caruso L."/>
            <person name="Cedroni M."/>
            <person name="Cotton M."/>
            <person name="Davidson T."/>
            <person name="Desai A."/>
            <person name="Elliott G."/>
            <person name="Erb T."/>
            <person name="Fronick C."/>
            <person name="Gaige T."/>
            <person name="Haakenson W."/>
            <person name="Haglund K."/>
            <person name="Holmes A."/>
            <person name="Harkins R."/>
            <person name="Kim K."/>
            <person name="Kruchowski S.S."/>
            <person name="Strong C.M."/>
            <person name="Grewal N."/>
            <person name="Goyea E."/>
            <person name="Hou S."/>
            <person name="Levy A."/>
            <person name="Martinka S."/>
            <person name="Mead K."/>
            <person name="McLellan M.D."/>
            <person name="Meyer R."/>
            <person name="Randall-Maher J."/>
            <person name="Tomlinson C."/>
            <person name="Dauphin-Kohlberg S."/>
            <person name="Kozlowicz-Reilly A."/>
            <person name="Shah N."/>
            <person name="Swearengen-Shahid S."/>
            <person name="Snider J."/>
            <person name="Strong J.T."/>
            <person name="Thompson J."/>
            <person name="Yoakum M."/>
            <person name="Leonard S."/>
            <person name="Pearman C."/>
            <person name="Trani L."/>
            <person name="Radionenko M."/>
            <person name="Waligorski J.E."/>
            <person name="Wang C."/>
            <person name="Rock S.M."/>
            <person name="Tin-Wollam A.-M."/>
            <person name="Maupin R."/>
            <person name="Latreille P."/>
            <person name="Wendl M.C."/>
            <person name="Yang S.-P."/>
            <person name="Pohl C."/>
            <person name="Wallis J.W."/>
            <person name="Spieth J."/>
            <person name="Bieri T.A."/>
            <person name="Berkowicz N."/>
            <person name="Nelson J.O."/>
            <person name="Osborne J."/>
            <person name="Ding L."/>
            <person name="Meyer R."/>
            <person name="Sabo A."/>
            <person name="Shotland Y."/>
            <person name="Sinha P."/>
            <person name="Wohldmann P.E."/>
            <person name="Cook L.L."/>
            <person name="Hickenbotham M.T."/>
            <person name="Eldred J."/>
            <person name="Williams D."/>
            <person name="Jones T.A."/>
            <person name="She X."/>
            <person name="Ciccarelli F.D."/>
            <person name="Izaurralde E."/>
            <person name="Taylor J."/>
            <person name="Schmutz J."/>
            <person name="Myers R.M."/>
            <person name="Cox D.R."/>
            <person name="Huang X."/>
            <person name="McPherson J.D."/>
            <person name="Mardis E.R."/>
            <person name="Clifton S.W."/>
            <person name="Warren W.C."/>
            <person name="Chinwalla A.T."/>
            <person name="Eddy S.R."/>
            <person name="Marra M.A."/>
            <person name="Ovcharenko I."/>
            <person name="Furey T.S."/>
            <person name="Miller W."/>
            <person name="Eichler E.E."/>
            <person name="Bork P."/>
            <person name="Suyama M."/>
            <person name="Torrents D."/>
            <person name="Waterston R.H."/>
            <person name="Wilson R.K."/>
        </authorList>
    </citation>
    <scope>NUCLEOTIDE SEQUENCE [LARGE SCALE GENOMIC DNA]</scope>
</reference>
<reference key="3">
    <citation type="journal article" date="2004" name="Genome Res.">
        <title>The status, quality, and expansion of the NIH full-length cDNA project: the Mammalian Gene Collection (MGC).</title>
        <authorList>
            <consortium name="The MGC Project Team"/>
        </authorList>
    </citation>
    <scope>NUCLEOTIDE SEQUENCE [LARGE SCALE MRNA] (ISOFORM 2)</scope>
    <scope>VARIANT ASP-223</scope>
    <source>
        <tissue>Brain</tissue>
    </source>
</reference>
<reference key="4">
    <citation type="journal article" date="2008" name="Proc. Natl. Acad. Sci. U.S.A.">
        <title>A quantitative atlas of mitotic phosphorylation.</title>
        <authorList>
            <person name="Dephoure N."/>
            <person name="Zhou C."/>
            <person name="Villen J."/>
            <person name="Beausoleil S.A."/>
            <person name="Bakalarski C.E."/>
            <person name="Elledge S.J."/>
            <person name="Gygi S.P."/>
        </authorList>
    </citation>
    <scope>PHOSPHORYLATION [LARGE SCALE ANALYSIS] AT THR-458</scope>
    <scope>IDENTIFICATION BY MASS SPECTROMETRY [LARGE SCALE ANALYSIS]</scope>
    <source>
        <tissue>Cervix carcinoma</tissue>
    </source>
</reference>
<dbReference type="EMBL" id="AK093494">
    <property type="protein sequence ID" value="BAC04184.1"/>
    <property type="molecule type" value="mRNA"/>
</dbReference>
<dbReference type="EMBL" id="AC008277">
    <property type="status" value="NOT_ANNOTATED_CDS"/>
    <property type="molecule type" value="Genomic_DNA"/>
</dbReference>
<dbReference type="EMBL" id="AC009307">
    <property type="protein sequence ID" value="AAX93043.1"/>
    <property type="molecule type" value="Genomic_DNA"/>
</dbReference>
<dbReference type="EMBL" id="BC029520">
    <property type="protein sequence ID" value="AAH29520.1"/>
    <property type="molecule type" value="mRNA"/>
</dbReference>
<dbReference type="CCDS" id="CCDS2208.1">
    <molecule id="Q8N9V3-1"/>
</dbReference>
<dbReference type="CCDS" id="CCDS77477.1">
    <molecule id="Q8N9V3-2"/>
</dbReference>
<dbReference type="RefSeq" id="NP_001121684.1">
    <molecule id="Q8N9V3-1"/>
    <property type="nucleotide sequence ID" value="NM_001128212.3"/>
</dbReference>
<dbReference type="RefSeq" id="NP_001121685.1">
    <molecule id="Q8N9V3-1"/>
    <property type="nucleotide sequence ID" value="NM_001128213.2"/>
</dbReference>
<dbReference type="RefSeq" id="NP_001294923.1">
    <molecule id="Q8N9V3-2"/>
    <property type="nucleotide sequence ID" value="NM_001307994.2"/>
</dbReference>
<dbReference type="RefSeq" id="NP_001317207.1">
    <molecule id="Q8N9V3-1"/>
    <property type="nucleotide sequence ID" value="NM_001330278.2"/>
</dbReference>
<dbReference type="RefSeq" id="NP_689741.2">
    <molecule id="Q8N9V3-1"/>
    <property type="nucleotide sequence ID" value="NM_152528.3"/>
</dbReference>
<dbReference type="RefSeq" id="XP_047299482.1">
    <molecule id="Q8N9V3-2"/>
    <property type="nucleotide sequence ID" value="XM_047443526.1"/>
</dbReference>
<dbReference type="RefSeq" id="XP_054196786.1">
    <molecule id="Q8N9V3-2"/>
    <property type="nucleotide sequence ID" value="XM_054340811.1"/>
</dbReference>
<dbReference type="SMR" id="Q8N9V3"/>
<dbReference type="BioGRID" id="127386">
    <property type="interactions" value="4"/>
</dbReference>
<dbReference type="FunCoup" id="Q8N9V3">
    <property type="interactions" value="212"/>
</dbReference>
<dbReference type="STRING" id="9606.ENSP00000387078"/>
<dbReference type="iPTMnet" id="Q8N9V3"/>
<dbReference type="PhosphoSitePlus" id="Q8N9V3"/>
<dbReference type="BioMuta" id="WDSUB1"/>
<dbReference type="DMDM" id="229463016"/>
<dbReference type="jPOST" id="Q8N9V3"/>
<dbReference type="MassIVE" id="Q8N9V3"/>
<dbReference type="PaxDb" id="9606-ENSP00000387078"/>
<dbReference type="PeptideAtlas" id="Q8N9V3"/>
<dbReference type="ProteomicsDB" id="72588">
    <molecule id="Q8N9V3-1"/>
</dbReference>
<dbReference type="ProteomicsDB" id="72589">
    <molecule id="Q8N9V3-2"/>
</dbReference>
<dbReference type="Pumba" id="Q8N9V3"/>
<dbReference type="Antibodypedia" id="33718">
    <property type="antibodies" value="116 antibodies from 20 providers"/>
</dbReference>
<dbReference type="DNASU" id="151525"/>
<dbReference type="Ensembl" id="ENST00000358147.8">
    <molecule id="Q8N9V3-2"/>
    <property type="protein sequence ID" value="ENSP00000350866.4"/>
    <property type="gene ID" value="ENSG00000196151.11"/>
</dbReference>
<dbReference type="Ensembl" id="ENST00000359774.9">
    <molecule id="Q8N9V3-1"/>
    <property type="protein sequence ID" value="ENSP00000352820.4"/>
    <property type="gene ID" value="ENSG00000196151.11"/>
</dbReference>
<dbReference type="Ensembl" id="ENST00000392796.7">
    <molecule id="Q8N9V3-1"/>
    <property type="protein sequence ID" value="ENSP00000376545.3"/>
    <property type="gene ID" value="ENSG00000196151.11"/>
</dbReference>
<dbReference type="Ensembl" id="ENST00000409990.7">
    <molecule id="Q8N9V3-1"/>
    <property type="protein sequence ID" value="ENSP00000387078.3"/>
    <property type="gene ID" value="ENSG00000196151.11"/>
</dbReference>
<dbReference type="GeneID" id="151525"/>
<dbReference type="KEGG" id="hsa:151525"/>
<dbReference type="MANE-Select" id="ENST00000359774.9">
    <property type="protein sequence ID" value="ENSP00000352820.4"/>
    <property type="RefSeq nucleotide sequence ID" value="NM_001128212.3"/>
    <property type="RefSeq protein sequence ID" value="NP_001121684.1"/>
</dbReference>
<dbReference type="UCSC" id="uc002uaj.5">
    <molecule id="Q8N9V3-1"/>
    <property type="organism name" value="human"/>
</dbReference>
<dbReference type="AGR" id="HGNC:26697"/>
<dbReference type="CTD" id="151525"/>
<dbReference type="DisGeNET" id="151525"/>
<dbReference type="GeneCards" id="WDSUB1"/>
<dbReference type="HGNC" id="HGNC:26697">
    <property type="gene designation" value="WDSUB1"/>
</dbReference>
<dbReference type="HPA" id="ENSG00000196151">
    <property type="expression patterns" value="Low tissue specificity"/>
</dbReference>
<dbReference type="MIM" id="620802">
    <property type="type" value="gene"/>
</dbReference>
<dbReference type="neXtProt" id="NX_Q8N9V3"/>
<dbReference type="OpenTargets" id="ENSG00000196151"/>
<dbReference type="PharmGKB" id="PA128394761"/>
<dbReference type="VEuPathDB" id="HostDB:ENSG00000196151"/>
<dbReference type="eggNOG" id="KOG4155">
    <property type="taxonomic scope" value="Eukaryota"/>
</dbReference>
<dbReference type="GeneTree" id="ENSGT00940000157230"/>
<dbReference type="HOGENOM" id="CLU_038099_0_0_1"/>
<dbReference type="InParanoid" id="Q8N9V3"/>
<dbReference type="OMA" id="YSEKAHD"/>
<dbReference type="OrthoDB" id="10064100at2759"/>
<dbReference type="PAN-GO" id="Q8N9V3">
    <property type="GO annotations" value="0 GO annotations based on evolutionary models"/>
</dbReference>
<dbReference type="PhylomeDB" id="Q8N9V3"/>
<dbReference type="TreeFam" id="TF328991"/>
<dbReference type="PathwayCommons" id="Q8N9V3"/>
<dbReference type="SignaLink" id="Q8N9V3"/>
<dbReference type="SIGNOR" id="Q8N9V3"/>
<dbReference type="BioGRID-ORCS" id="151525">
    <property type="hits" value="14 hits in 1206 CRISPR screens"/>
</dbReference>
<dbReference type="ChiTaRS" id="WDSUB1">
    <property type="organism name" value="human"/>
</dbReference>
<dbReference type="GenomeRNAi" id="151525"/>
<dbReference type="Pharos" id="Q8N9V3">
    <property type="development level" value="Tdark"/>
</dbReference>
<dbReference type="PRO" id="PR:Q8N9V3"/>
<dbReference type="Proteomes" id="UP000005640">
    <property type="component" value="Chromosome 2"/>
</dbReference>
<dbReference type="RNAct" id="Q8N9V3">
    <property type="molecule type" value="protein"/>
</dbReference>
<dbReference type="Bgee" id="ENSG00000196151">
    <property type="expression patterns" value="Expressed in primordial germ cell in gonad and 185 other cell types or tissues"/>
</dbReference>
<dbReference type="ExpressionAtlas" id="Q8N9V3">
    <property type="expression patterns" value="baseline and differential"/>
</dbReference>
<dbReference type="GO" id="GO:0004842">
    <property type="term" value="F:ubiquitin-protein transferase activity"/>
    <property type="evidence" value="ECO:0007669"/>
    <property type="project" value="InterPro"/>
</dbReference>
<dbReference type="GO" id="GO:0016567">
    <property type="term" value="P:protein ubiquitination"/>
    <property type="evidence" value="ECO:0007669"/>
    <property type="project" value="InterPro"/>
</dbReference>
<dbReference type="CDD" id="cd16655">
    <property type="entry name" value="RING-Ubox_WDSUB1-like"/>
    <property type="match status" value="1"/>
</dbReference>
<dbReference type="CDD" id="cd09505">
    <property type="entry name" value="SAM_WDSUB1"/>
    <property type="match status" value="1"/>
</dbReference>
<dbReference type="CDD" id="cd00200">
    <property type="entry name" value="WD40"/>
    <property type="match status" value="1"/>
</dbReference>
<dbReference type="Gene3D" id="1.10.150.50">
    <property type="entry name" value="Transcription Factor, Ets-1"/>
    <property type="match status" value="1"/>
</dbReference>
<dbReference type="Gene3D" id="2.130.10.10">
    <property type="entry name" value="YVTN repeat-like/Quinoprotein amine dehydrogenase"/>
    <property type="match status" value="3"/>
</dbReference>
<dbReference type="Gene3D" id="3.30.40.10">
    <property type="entry name" value="Zinc/RING finger domain, C3HC4 (zinc finger)"/>
    <property type="match status" value="1"/>
</dbReference>
<dbReference type="InterPro" id="IPR020472">
    <property type="entry name" value="G-protein_beta_WD-40_rep"/>
</dbReference>
<dbReference type="InterPro" id="IPR001660">
    <property type="entry name" value="SAM"/>
</dbReference>
<dbReference type="InterPro" id="IPR013761">
    <property type="entry name" value="SAM/pointed_sf"/>
</dbReference>
<dbReference type="InterPro" id="IPR003613">
    <property type="entry name" value="Ubox_domain"/>
</dbReference>
<dbReference type="InterPro" id="IPR052085">
    <property type="entry name" value="WD-SAM-U-box"/>
</dbReference>
<dbReference type="InterPro" id="IPR015943">
    <property type="entry name" value="WD40/YVTN_repeat-like_dom_sf"/>
</dbReference>
<dbReference type="InterPro" id="IPR019775">
    <property type="entry name" value="WD40_repeat_CS"/>
</dbReference>
<dbReference type="InterPro" id="IPR036322">
    <property type="entry name" value="WD40_repeat_dom_sf"/>
</dbReference>
<dbReference type="InterPro" id="IPR001680">
    <property type="entry name" value="WD40_rpt"/>
</dbReference>
<dbReference type="InterPro" id="IPR013083">
    <property type="entry name" value="Znf_RING/FYVE/PHD"/>
</dbReference>
<dbReference type="PANTHER" id="PTHR46573">
    <property type="entry name" value="WD REPEAT, SAM AND U-BOX DOMAIN-CONTAINING PROTEIN 1"/>
    <property type="match status" value="1"/>
</dbReference>
<dbReference type="PANTHER" id="PTHR46573:SF1">
    <property type="entry name" value="WD REPEAT, SAM AND U-BOX DOMAIN-CONTAINING PROTEIN 1"/>
    <property type="match status" value="1"/>
</dbReference>
<dbReference type="Pfam" id="PF07647">
    <property type="entry name" value="SAM_2"/>
    <property type="match status" value="1"/>
</dbReference>
<dbReference type="Pfam" id="PF04564">
    <property type="entry name" value="U-box"/>
    <property type="match status" value="1"/>
</dbReference>
<dbReference type="Pfam" id="PF00400">
    <property type="entry name" value="WD40"/>
    <property type="match status" value="7"/>
</dbReference>
<dbReference type="PRINTS" id="PR00320">
    <property type="entry name" value="GPROTEINBRPT"/>
</dbReference>
<dbReference type="SMART" id="SM00454">
    <property type="entry name" value="SAM"/>
    <property type="match status" value="1"/>
</dbReference>
<dbReference type="SMART" id="SM00504">
    <property type="entry name" value="Ubox"/>
    <property type="match status" value="1"/>
</dbReference>
<dbReference type="SMART" id="SM00320">
    <property type="entry name" value="WD40"/>
    <property type="match status" value="7"/>
</dbReference>
<dbReference type="SUPFAM" id="SSF57850">
    <property type="entry name" value="RING/U-box"/>
    <property type="match status" value="1"/>
</dbReference>
<dbReference type="SUPFAM" id="SSF47769">
    <property type="entry name" value="SAM/Pointed domain"/>
    <property type="match status" value="1"/>
</dbReference>
<dbReference type="SUPFAM" id="SSF50978">
    <property type="entry name" value="WD40 repeat-like"/>
    <property type="match status" value="1"/>
</dbReference>
<dbReference type="PROSITE" id="PS50105">
    <property type="entry name" value="SAM_DOMAIN"/>
    <property type="match status" value="1"/>
</dbReference>
<dbReference type="PROSITE" id="PS51698">
    <property type="entry name" value="U_BOX"/>
    <property type="match status" value="1"/>
</dbReference>
<dbReference type="PROSITE" id="PS00678">
    <property type="entry name" value="WD_REPEATS_1"/>
    <property type="match status" value="2"/>
</dbReference>
<dbReference type="PROSITE" id="PS50082">
    <property type="entry name" value="WD_REPEATS_2"/>
    <property type="match status" value="5"/>
</dbReference>
<dbReference type="PROSITE" id="PS50294">
    <property type="entry name" value="WD_REPEATS_REGION"/>
    <property type="match status" value="1"/>
</dbReference>